<keyword id="KW-0025">Alternative splicing</keyword>
<keyword id="KW-0597">Phosphoprotein</keyword>
<keyword id="KW-1267">Proteomics identification</keyword>
<keyword id="KW-1185">Reference proteome</keyword>
<comment type="interaction">
    <interactant intactId="EBI-751248">
        <id>Q8NE31</id>
    </interactant>
    <interactant intactId="EBI-2548868">
        <id>P0C7W6</id>
        <label>CCDC172</label>
    </interactant>
    <organismsDiffer>false</organismsDiffer>
    <experiments>5</experiments>
</comment>
<comment type="interaction">
    <interactant intactId="EBI-751248">
        <id>Q8NE31</id>
    </interactant>
    <interactant intactId="EBI-739624">
        <id>Q8NHQ1</id>
        <label>CEP70</label>
    </interactant>
    <organismsDiffer>false</organismsDiffer>
    <experiments>3</experiments>
</comment>
<comment type="interaction">
    <interactant intactId="EBI-751248">
        <id>Q8NE31</id>
    </interactant>
    <interactant intactId="EBI-739789">
        <id>Q92997</id>
        <label>DVL3</label>
    </interactant>
    <organismsDiffer>false</organismsDiffer>
    <experiments>3</experiments>
</comment>
<comment type="interaction">
    <interactant intactId="EBI-751248">
        <id>Q8NE31</id>
    </interactant>
    <interactant intactId="EBI-2549423">
        <id>Q6NT76</id>
        <label>HMBOX1</label>
    </interactant>
    <organismsDiffer>false</organismsDiffer>
    <experiments>3</experiments>
</comment>
<comment type="interaction">
    <interactant intactId="EBI-751248">
        <id>Q8NE31</id>
    </interactant>
    <interactant intactId="EBI-2692369">
        <id>O00139</id>
        <label>KIF2A</label>
    </interactant>
    <organismsDiffer>false</organismsDiffer>
    <experiments>4</experiments>
</comment>
<comment type="interaction">
    <interactant intactId="EBI-751248">
        <id>Q8NE31</id>
    </interactant>
    <interactant intactId="EBI-394607">
        <id>Q9NPJ6</id>
        <label>MED4</label>
    </interactant>
    <organismsDiffer>false</organismsDiffer>
    <experiments>3</experiments>
</comment>
<comment type="interaction">
    <interactant intactId="EBI-751248">
        <id>Q8NE31</id>
    </interactant>
    <interactant intactId="EBI-748397">
        <id>P50222</id>
        <label>MEOX2</label>
    </interactant>
    <organismsDiffer>false</organismsDiffer>
    <experiments>3</experiments>
</comment>
<comment type="interaction">
    <interactant intactId="EBI-751248">
        <id>Q8NE31</id>
    </interactant>
    <interactant intactId="EBI-6165891">
        <id>Q14696</id>
        <label>MESD</label>
    </interactant>
    <organismsDiffer>false</organismsDiffer>
    <experiments>3</experiments>
</comment>
<comment type="interaction">
    <interactant intactId="EBI-751248">
        <id>Q8NE31</id>
    </interactant>
    <interactant intactId="EBI-10288852">
        <id>Q9UBU8-2</id>
        <label>MORF4L1</label>
    </interactant>
    <organismsDiffer>false</organismsDiffer>
    <experiments>3</experiments>
</comment>
<comment type="interaction">
    <interactant intactId="EBI-751248">
        <id>Q8NE31</id>
    </interactant>
    <interactant intactId="EBI-742948">
        <id>Q5JR59</id>
        <label>MTUS2</label>
    </interactant>
    <organismsDiffer>false</organismsDiffer>
    <experiments>3</experiments>
</comment>
<comment type="interaction">
    <interactant intactId="EBI-751248">
        <id>Q8NE31</id>
    </interactant>
    <interactant intactId="EBI-713786">
        <id>Q8IXK0</id>
        <label>PHC2</label>
    </interactant>
    <organismsDiffer>false</organismsDiffer>
    <experiments>3</experiments>
</comment>
<comment type="interaction">
    <interactant intactId="EBI-751248">
        <id>Q8NE31</id>
    </interactant>
    <interactant intactId="EBI-742426">
        <id>Q9H190</id>
        <label>SDCBP2</label>
    </interactant>
    <organismsDiffer>false</organismsDiffer>
    <experiments>3</experiments>
</comment>
<comment type="interaction">
    <interactant intactId="EBI-751248">
        <id>Q8NE31</id>
    </interactant>
    <interactant intactId="EBI-1105213">
        <id>Q9UBB9</id>
        <label>TFIP11</label>
    </interactant>
    <organismsDiffer>false</organismsDiffer>
    <experiments>5</experiments>
</comment>
<comment type="alternative products">
    <event type="alternative splicing"/>
    <isoform>
        <id>Q8NE31-1</id>
        <name>1</name>
        <sequence type="displayed"/>
    </isoform>
    <isoform>
        <id>Q8NE31-2</id>
        <name>2</name>
        <sequence type="described" ref="VSP_035841 VSP_035842"/>
    </isoform>
    <isoform>
        <id>Q8NE31-3</id>
        <name>3</name>
        <sequence type="described" ref="VSP_035840"/>
    </isoform>
    <isoform>
        <id>Q8NE31-4</id>
        <name>4</name>
        <sequence type="described" ref="VSP_044286"/>
    </isoform>
    <isoform>
        <id>Q8NE31-5</id>
        <name>5</name>
        <sequence type="described" ref="VSP_044286 VSP_045812"/>
    </isoform>
</comment>
<comment type="similarity">
    <text evidence="7">Belongs to the FAM13 family.</text>
</comment>
<dbReference type="EMBL" id="AK316542">
    <property type="protein sequence ID" value="BAH14913.1"/>
    <property type="molecule type" value="mRNA"/>
</dbReference>
<dbReference type="EMBL" id="AC025038">
    <property type="status" value="NOT_ANNOTATED_CDS"/>
    <property type="molecule type" value="Genomic_DNA"/>
</dbReference>
<dbReference type="EMBL" id="AL355474">
    <property type="status" value="NOT_ANNOTATED_CDS"/>
    <property type="molecule type" value="Genomic_DNA"/>
</dbReference>
<dbReference type="EMBL" id="CH471083">
    <property type="protein sequence ID" value="EAW54190.1"/>
    <property type="molecule type" value="Genomic_DNA"/>
</dbReference>
<dbReference type="EMBL" id="BC036453">
    <property type="protein sequence ID" value="AAH36453.1"/>
    <property type="molecule type" value="mRNA"/>
</dbReference>
<dbReference type="EMBL" id="BC064431">
    <property type="protein sequence ID" value="AAH64431.1"/>
    <property type="molecule type" value="mRNA"/>
</dbReference>
<dbReference type="EMBL" id="U79304">
    <property type="protein sequence ID" value="AAB50228.1"/>
    <property type="molecule type" value="mRNA"/>
</dbReference>
<dbReference type="CCDS" id="CCDS31207.1">
    <molecule id="Q8NE31-3"/>
</dbReference>
<dbReference type="CCDS" id="CCDS44406.1">
    <molecule id="Q8NE31-4"/>
</dbReference>
<dbReference type="CCDS" id="CCDS53538.1">
    <molecule id="Q8NE31-5"/>
</dbReference>
<dbReference type="CCDS" id="CCDS7255.1">
    <molecule id="Q8NE31-1"/>
</dbReference>
<dbReference type="RefSeq" id="NP_001001971.1">
    <molecule id="Q8NE31-3"/>
    <property type="nucleotide sequence ID" value="NM_001001971.3"/>
</dbReference>
<dbReference type="RefSeq" id="NP_001137245.1">
    <molecule id="Q8NE31-4"/>
    <property type="nucleotide sequence ID" value="NM_001143773.1"/>
</dbReference>
<dbReference type="RefSeq" id="NP_001160170.1">
    <molecule id="Q8NE31-5"/>
    <property type="nucleotide sequence ID" value="NM_001166698.2"/>
</dbReference>
<dbReference type="RefSeq" id="NP_001334769.1">
    <molecule id="Q8NE31-4"/>
    <property type="nucleotide sequence ID" value="NM_001347840.2"/>
</dbReference>
<dbReference type="RefSeq" id="NP_001334771.1">
    <molecule id="Q8NE31-5"/>
    <property type="nucleotide sequence ID" value="NM_001347842.2"/>
</dbReference>
<dbReference type="RefSeq" id="NP_001334772.1">
    <property type="nucleotide sequence ID" value="NM_001347843.1"/>
</dbReference>
<dbReference type="RefSeq" id="NP_001334773.1">
    <molecule id="Q8NE31-5"/>
    <property type="nucleotide sequence ID" value="NM_001347844.1"/>
</dbReference>
<dbReference type="RefSeq" id="NP_001334774.1">
    <property type="nucleotide sequence ID" value="NM_001347845.1"/>
</dbReference>
<dbReference type="RefSeq" id="NP_001334776.1">
    <molecule id="Q8NE31-4"/>
    <property type="nucleotide sequence ID" value="NM_001347847.1"/>
</dbReference>
<dbReference type="RefSeq" id="NP_001334777.1">
    <property type="nucleotide sequence ID" value="NM_001347848.1"/>
</dbReference>
<dbReference type="RefSeq" id="NP_001334779.1">
    <property type="nucleotide sequence ID" value="NM_001347850.1"/>
</dbReference>
<dbReference type="RefSeq" id="NP_937858.2">
    <molecule id="Q8NE31-1"/>
    <property type="nucleotide sequence ID" value="NM_198215.4"/>
</dbReference>
<dbReference type="RefSeq" id="XP_006717765.1">
    <molecule id="Q8NE31-4"/>
    <property type="nucleotide sequence ID" value="XM_006717702.4"/>
</dbReference>
<dbReference type="RefSeq" id="XP_016871375.1">
    <molecule id="Q8NE31-5"/>
    <property type="nucleotide sequence ID" value="XM_017015886.2"/>
</dbReference>
<dbReference type="RefSeq" id="XP_016871378.1">
    <property type="nucleotide sequence ID" value="XM_017015889.1"/>
</dbReference>
<dbReference type="RefSeq" id="XP_054221061.1">
    <molecule id="Q8NE31-4"/>
    <property type="nucleotide sequence ID" value="XM_054365086.1"/>
</dbReference>
<dbReference type="RefSeq" id="XP_054221062.1">
    <molecule id="Q8NE31-5"/>
    <property type="nucleotide sequence ID" value="XM_054365087.1"/>
</dbReference>
<dbReference type="SMR" id="Q8NE31"/>
<dbReference type="BioGRID" id="128665">
    <property type="interactions" value="25"/>
</dbReference>
<dbReference type="FunCoup" id="Q8NE31">
    <property type="interactions" value="386"/>
</dbReference>
<dbReference type="IntAct" id="Q8NE31">
    <property type="interactions" value="19"/>
</dbReference>
<dbReference type="STRING" id="9606.ENSP00000481854"/>
<dbReference type="iPTMnet" id="Q8NE31"/>
<dbReference type="PhosphoSitePlus" id="Q8NE31"/>
<dbReference type="BioMuta" id="FAM13C"/>
<dbReference type="DMDM" id="215273980"/>
<dbReference type="MassIVE" id="Q8NE31"/>
<dbReference type="PaxDb" id="9606-ENSP00000481854"/>
<dbReference type="PeptideAtlas" id="Q8NE31"/>
<dbReference type="ProteomicsDB" id="7098"/>
<dbReference type="ProteomicsDB" id="73121">
    <molecule id="Q8NE31-1"/>
</dbReference>
<dbReference type="ProteomicsDB" id="73122">
    <molecule id="Q8NE31-2"/>
</dbReference>
<dbReference type="ProteomicsDB" id="73123">
    <molecule id="Q8NE31-3"/>
</dbReference>
<dbReference type="Antibodypedia" id="28120">
    <property type="antibodies" value="74 antibodies from 16 providers"/>
</dbReference>
<dbReference type="DNASU" id="220965"/>
<dbReference type="Ensembl" id="ENST00000422313.6">
    <molecule id="Q8NE31-2"/>
    <property type="protein sequence ID" value="ENSP00000400241.2"/>
    <property type="gene ID" value="ENSG00000148541.13"/>
</dbReference>
<dbReference type="Ensembl" id="ENST00000468840.6">
    <molecule id="Q8NE31-4"/>
    <property type="protein sequence ID" value="ENSP00000423896.1"/>
    <property type="gene ID" value="ENSG00000148541.13"/>
</dbReference>
<dbReference type="Ensembl" id="ENST00000611933.4">
    <molecule id="Q8NE31-3"/>
    <property type="protein sequence ID" value="ENSP00000481830.1"/>
    <property type="gene ID" value="ENSG00000148541.13"/>
</dbReference>
<dbReference type="Ensembl" id="ENST00000618427.4">
    <molecule id="Q8NE31-5"/>
    <property type="protein sequence ID" value="ENSP00000480677.1"/>
    <property type="gene ID" value="ENSG00000148541.13"/>
</dbReference>
<dbReference type="Ensembl" id="ENST00000618804.5">
    <molecule id="Q8NE31-1"/>
    <property type="protein sequence ID" value="ENSP00000481854.1"/>
    <property type="gene ID" value="ENSG00000148541.13"/>
</dbReference>
<dbReference type="GeneID" id="220965"/>
<dbReference type="KEGG" id="hsa:220965"/>
<dbReference type="MANE-Select" id="ENST00000618804.5">
    <property type="protein sequence ID" value="ENSP00000481854.1"/>
    <property type="RefSeq nucleotide sequence ID" value="NM_198215.4"/>
    <property type="RefSeq protein sequence ID" value="NP_937858.2"/>
</dbReference>
<dbReference type="UCSC" id="uc001jkp.4">
    <molecule id="Q8NE31-1"/>
    <property type="organism name" value="human"/>
</dbReference>
<dbReference type="AGR" id="HGNC:19371"/>
<dbReference type="CTD" id="220965"/>
<dbReference type="DisGeNET" id="220965"/>
<dbReference type="GeneCards" id="FAM13C"/>
<dbReference type="HGNC" id="HGNC:19371">
    <property type="gene designation" value="FAM13C"/>
</dbReference>
<dbReference type="HPA" id="ENSG00000148541">
    <property type="expression patterns" value="Tissue enhanced (brain)"/>
</dbReference>
<dbReference type="MalaCards" id="FAM13C"/>
<dbReference type="neXtProt" id="NX_Q8NE31"/>
<dbReference type="OpenTargets" id="ENSG00000148541"/>
<dbReference type="PharmGKB" id="PA164719657"/>
<dbReference type="VEuPathDB" id="HostDB:ENSG00000148541"/>
<dbReference type="eggNOG" id="ENOG502QWSB">
    <property type="taxonomic scope" value="Eukaryota"/>
</dbReference>
<dbReference type="GeneTree" id="ENSGT00950000183033"/>
<dbReference type="HOGENOM" id="CLU_012606_2_0_1"/>
<dbReference type="InParanoid" id="Q8NE31"/>
<dbReference type="OMA" id="WLMFSCF"/>
<dbReference type="OrthoDB" id="185175at2759"/>
<dbReference type="PAN-GO" id="Q8NE31">
    <property type="GO annotations" value="0 GO annotations based on evolutionary models"/>
</dbReference>
<dbReference type="PhylomeDB" id="Q8NE31"/>
<dbReference type="TreeFam" id="TF328895"/>
<dbReference type="PathwayCommons" id="Q8NE31"/>
<dbReference type="SignaLink" id="Q8NE31"/>
<dbReference type="BioGRID-ORCS" id="220965">
    <property type="hits" value="7 hits in 1145 CRISPR screens"/>
</dbReference>
<dbReference type="ChiTaRS" id="FAM13C">
    <property type="organism name" value="human"/>
</dbReference>
<dbReference type="GenomeRNAi" id="220965"/>
<dbReference type="Pharos" id="Q8NE31">
    <property type="development level" value="Tdark"/>
</dbReference>
<dbReference type="PRO" id="PR:Q8NE31"/>
<dbReference type="Proteomes" id="UP000005640">
    <property type="component" value="Chromosome 10"/>
</dbReference>
<dbReference type="RNAct" id="Q8NE31">
    <property type="molecule type" value="protein"/>
</dbReference>
<dbReference type="Bgee" id="ENSG00000148541">
    <property type="expression patterns" value="Expressed in corpus callosum and 173 other cell types or tissues"/>
</dbReference>
<dbReference type="ExpressionAtlas" id="Q8NE31">
    <property type="expression patterns" value="baseline and differential"/>
</dbReference>
<dbReference type="InterPro" id="IPR039102">
    <property type="entry name" value="FAM13"/>
</dbReference>
<dbReference type="PANTHER" id="PTHR15904">
    <property type="entry name" value="FAM13"/>
    <property type="match status" value="1"/>
</dbReference>
<dbReference type="PANTHER" id="PTHR15904:SF19">
    <property type="entry name" value="PROTEIN FAM13C"/>
    <property type="match status" value="1"/>
</dbReference>
<evidence type="ECO:0000250" key="1">
    <source>
        <dbReference type="UniProtKB" id="Q9DBR2"/>
    </source>
</evidence>
<evidence type="ECO:0000256" key="2">
    <source>
        <dbReference type="SAM" id="MobiDB-lite"/>
    </source>
</evidence>
<evidence type="ECO:0000269" key="3">
    <source>
    </source>
</evidence>
<evidence type="ECO:0000303" key="4">
    <source>
    </source>
</evidence>
<evidence type="ECO:0000303" key="5">
    <source>
    </source>
</evidence>
<evidence type="ECO:0000303" key="6">
    <source>
    </source>
</evidence>
<evidence type="ECO:0000305" key="7"/>
<name>FA13C_HUMAN</name>
<reference key="1">
    <citation type="journal article" date="2004" name="Nat. Genet.">
        <title>Complete sequencing and characterization of 21,243 full-length human cDNAs.</title>
        <authorList>
            <person name="Ota T."/>
            <person name="Suzuki Y."/>
            <person name="Nishikawa T."/>
            <person name="Otsuki T."/>
            <person name="Sugiyama T."/>
            <person name="Irie R."/>
            <person name="Wakamatsu A."/>
            <person name="Hayashi K."/>
            <person name="Sato H."/>
            <person name="Nagai K."/>
            <person name="Kimura K."/>
            <person name="Makita H."/>
            <person name="Sekine M."/>
            <person name="Obayashi M."/>
            <person name="Nishi T."/>
            <person name="Shibahara T."/>
            <person name="Tanaka T."/>
            <person name="Ishii S."/>
            <person name="Yamamoto J."/>
            <person name="Saito K."/>
            <person name="Kawai Y."/>
            <person name="Isono Y."/>
            <person name="Nakamura Y."/>
            <person name="Nagahari K."/>
            <person name="Murakami K."/>
            <person name="Yasuda T."/>
            <person name="Iwayanagi T."/>
            <person name="Wagatsuma M."/>
            <person name="Shiratori A."/>
            <person name="Sudo H."/>
            <person name="Hosoiri T."/>
            <person name="Kaku Y."/>
            <person name="Kodaira H."/>
            <person name="Kondo H."/>
            <person name="Sugawara M."/>
            <person name="Takahashi M."/>
            <person name="Kanda K."/>
            <person name="Yokoi T."/>
            <person name="Furuya T."/>
            <person name="Kikkawa E."/>
            <person name="Omura Y."/>
            <person name="Abe K."/>
            <person name="Kamihara K."/>
            <person name="Katsuta N."/>
            <person name="Sato K."/>
            <person name="Tanikawa M."/>
            <person name="Yamazaki M."/>
            <person name="Ninomiya K."/>
            <person name="Ishibashi T."/>
            <person name="Yamashita H."/>
            <person name="Murakawa K."/>
            <person name="Fujimori K."/>
            <person name="Tanai H."/>
            <person name="Kimata M."/>
            <person name="Watanabe M."/>
            <person name="Hiraoka S."/>
            <person name="Chiba Y."/>
            <person name="Ishida S."/>
            <person name="Ono Y."/>
            <person name="Takiguchi S."/>
            <person name="Watanabe S."/>
            <person name="Yosida M."/>
            <person name="Hotuta T."/>
            <person name="Kusano J."/>
            <person name="Kanehori K."/>
            <person name="Takahashi-Fujii A."/>
            <person name="Hara H."/>
            <person name="Tanase T.-O."/>
            <person name="Nomura Y."/>
            <person name="Togiya S."/>
            <person name="Komai F."/>
            <person name="Hara R."/>
            <person name="Takeuchi K."/>
            <person name="Arita M."/>
            <person name="Imose N."/>
            <person name="Musashino K."/>
            <person name="Yuuki H."/>
            <person name="Oshima A."/>
            <person name="Sasaki N."/>
            <person name="Aotsuka S."/>
            <person name="Yoshikawa Y."/>
            <person name="Matsunawa H."/>
            <person name="Ichihara T."/>
            <person name="Shiohata N."/>
            <person name="Sano S."/>
            <person name="Moriya S."/>
            <person name="Momiyama H."/>
            <person name="Satoh N."/>
            <person name="Takami S."/>
            <person name="Terashima Y."/>
            <person name="Suzuki O."/>
            <person name="Nakagawa S."/>
            <person name="Senoh A."/>
            <person name="Mizoguchi H."/>
            <person name="Goto Y."/>
            <person name="Shimizu F."/>
            <person name="Wakebe H."/>
            <person name="Hishigaki H."/>
            <person name="Watanabe T."/>
            <person name="Sugiyama A."/>
            <person name="Takemoto M."/>
            <person name="Kawakami B."/>
            <person name="Yamazaki M."/>
            <person name="Watanabe K."/>
            <person name="Kumagai A."/>
            <person name="Itakura S."/>
            <person name="Fukuzumi Y."/>
            <person name="Fujimori Y."/>
            <person name="Komiyama M."/>
            <person name="Tashiro H."/>
            <person name="Tanigami A."/>
            <person name="Fujiwara T."/>
            <person name="Ono T."/>
            <person name="Yamada K."/>
            <person name="Fujii Y."/>
            <person name="Ozaki K."/>
            <person name="Hirao M."/>
            <person name="Ohmori Y."/>
            <person name="Kawabata A."/>
            <person name="Hikiji T."/>
            <person name="Kobatake N."/>
            <person name="Inagaki H."/>
            <person name="Ikema Y."/>
            <person name="Okamoto S."/>
            <person name="Okitani R."/>
            <person name="Kawakami T."/>
            <person name="Noguchi S."/>
            <person name="Itoh T."/>
            <person name="Shigeta K."/>
            <person name="Senba T."/>
            <person name="Matsumura K."/>
            <person name="Nakajima Y."/>
            <person name="Mizuno T."/>
            <person name="Morinaga M."/>
            <person name="Sasaki M."/>
            <person name="Togashi T."/>
            <person name="Oyama M."/>
            <person name="Hata H."/>
            <person name="Watanabe M."/>
            <person name="Komatsu T."/>
            <person name="Mizushima-Sugano J."/>
            <person name="Satoh T."/>
            <person name="Shirai Y."/>
            <person name="Takahashi Y."/>
            <person name="Nakagawa K."/>
            <person name="Okumura K."/>
            <person name="Nagase T."/>
            <person name="Nomura N."/>
            <person name="Kikuchi H."/>
            <person name="Masuho Y."/>
            <person name="Yamashita R."/>
            <person name="Nakai K."/>
            <person name="Yada T."/>
            <person name="Nakamura Y."/>
            <person name="Ohara O."/>
            <person name="Isogai T."/>
            <person name="Sugano S."/>
        </authorList>
    </citation>
    <scope>NUCLEOTIDE SEQUENCE [LARGE SCALE MRNA] (ISOFORM 4)</scope>
    <source>
        <tissue>Uterus</tissue>
    </source>
</reference>
<reference key="2">
    <citation type="journal article" date="2004" name="Nature">
        <title>The DNA sequence and comparative analysis of human chromosome 10.</title>
        <authorList>
            <person name="Deloukas P."/>
            <person name="Earthrowl M.E."/>
            <person name="Grafham D.V."/>
            <person name="Rubenfield M."/>
            <person name="French L."/>
            <person name="Steward C.A."/>
            <person name="Sims S.K."/>
            <person name="Jones M.C."/>
            <person name="Searle S."/>
            <person name="Scott C."/>
            <person name="Howe K."/>
            <person name="Hunt S.E."/>
            <person name="Andrews T.D."/>
            <person name="Gilbert J.G.R."/>
            <person name="Swarbreck D."/>
            <person name="Ashurst J.L."/>
            <person name="Taylor A."/>
            <person name="Battles J."/>
            <person name="Bird C.P."/>
            <person name="Ainscough R."/>
            <person name="Almeida J.P."/>
            <person name="Ashwell R.I.S."/>
            <person name="Ambrose K.D."/>
            <person name="Babbage A.K."/>
            <person name="Bagguley C.L."/>
            <person name="Bailey J."/>
            <person name="Banerjee R."/>
            <person name="Bates K."/>
            <person name="Beasley H."/>
            <person name="Bray-Allen S."/>
            <person name="Brown A.J."/>
            <person name="Brown J.Y."/>
            <person name="Burford D.C."/>
            <person name="Burrill W."/>
            <person name="Burton J."/>
            <person name="Cahill P."/>
            <person name="Camire D."/>
            <person name="Carter N.P."/>
            <person name="Chapman J.C."/>
            <person name="Clark S.Y."/>
            <person name="Clarke G."/>
            <person name="Clee C.M."/>
            <person name="Clegg S."/>
            <person name="Corby N."/>
            <person name="Coulson A."/>
            <person name="Dhami P."/>
            <person name="Dutta I."/>
            <person name="Dunn M."/>
            <person name="Faulkner L."/>
            <person name="Frankish A."/>
            <person name="Frankland J.A."/>
            <person name="Garner P."/>
            <person name="Garnett J."/>
            <person name="Gribble S."/>
            <person name="Griffiths C."/>
            <person name="Grocock R."/>
            <person name="Gustafson E."/>
            <person name="Hammond S."/>
            <person name="Harley J.L."/>
            <person name="Hart E."/>
            <person name="Heath P.D."/>
            <person name="Ho T.P."/>
            <person name="Hopkins B."/>
            <person name="Horne J."/>
            <person name="Howden P.J."/>
            <person name="Huckle E."/>
            <person name="Hynds C."/>
            <person name="Johnson C."/>
            <person name="Johnson D."/>
            <person name="Kana A."/>
            <person name="Kay M."/>
            <person name="Kimberley A.M."/>
            <person name="Kershaw J.K."/>
            <person name="Kokkinaki M."/>
            <person name="Laird G.K."/>
            <person name="Lawlor S."/>
            <person name="Lee H.M."/>
            <person name="Leongamornlert D.A."/>
            <person name="Laird G."/>
            <person name="Lloyd C."/>
            <person name="Lloyd D.M."/>
            <person name="Loveland J."/>
            <person name="Lovell J."/>
            <person name="McLaren S."/>
            <person name="McLay K.E."/>
            <person name="McMurray A."/>
            <person name="Mashreghi-Mohammadi M."/>
            <person name="Matthews L."/>
            <person name="Milne S."/>
            <person name="Nickerson T."/>
            <person name="Nguyen M."/>
            <person name="Overton-Larty E."/>
            <person name="Palmer S.A."/>
            <person name="Pearce A.V."/>
            <person name="Peck A.I."/>
            <person name="Pelan S."/>
            <person name="Phillimore B."/>
            <person name="Porter K."/>
            <person name="Rice C.M."/>
            <person name="Rogosin A."/>
            <person name="Ross M.T."/>
            <person name="Sarafidou T."/>
            <person name="Sehra H.K."/>
            <person name="Shownkeen R."/>
            <person name="Skuce C.D."/>
            <person name="Smith M."/>
            <person name="Standring L."/>
            <person name="Sycamore N."/>
            <person name="Tester J."/>
            <person name="Thorpe A."/>
            <person name="Torcasso W."/>
            <person name="Tracey A."/>
            <person name="Tromans A."/>
            <person name="Tsolas J."/>
            <person name="Wall M."/>
            <person name="Walsh J."/>
            <person name="Wang H."/>
            <person name="Weinstock K."/>
            <person name="West A.P."/>
            <person name="Willey D.L."/>
            <person name="Whitehead S.L."/>
            <person name="Wilming L."/>
            <person name="Wray P.W."/>
            <person name="Young L."/>
            <person name="Chen Y."/>
            <person name="Lovering R.C."/>
            <person name="Moschonas N.K."/>
            <person name="Siebert R."/>
            <person name="Fechtel K."/>
            <person name="Bentley D."/>
            <person name="Durbin R.M."/>
            <person name="Hubbard T."/>
            <person name="Doucette-Stamm L."/>
            <person name="Beck S."/>
            <person name="Smith D.R."/>
            <person name="Rogers J."/>
        </authorList>
    </citation>
    <scope>NUCLEOTIDE SEQUENCE [LARGE SCALE GENOMIC DNA]</scope>
</reference>
<reference key="3">
    <citation type="submission" date="2005-07" db="EMBL/GenBank/DDBJ databases">
        <authorList>
            <person name="Mural R.J."/>
            <person name="Istrail S."/>
            <person name="Sutton G.G."/>
            <person name="Florea L."/>
            <person name="Halpern A.L."/>
            <person name="Mobarry C.M."/>
            <person name="Lippert R."/>
            <person name="Walenz B."/>
            <person name="Shatkay H."/>
            <person name="Dew I."/>
            <person name="Miller J.R."/>
            <person name="Flanigan M.J."/>
            <person name="Edwards N.J."/>
            <person name="Bolanos R."/>
            <person name="Fasulo D."/>
            <person name="Halldorsson B.V."/>
            <person name="Hannenhalli S."/>
            <person name="Turner R."/>
            <person name="Yooseph S."/>
            <person name="Lu F."/>
            <person name="Nusskern D.R."/>
            <person name="Shue B.C."/>
            <person name="Zheng X.H."/>
            <person name="Zhong F."/>
            <person name="Delcher A.L."/>
            <person name="Huson D.H."/>
            <person name="Kravitz S.A."/>
            <person name="Mouchard L."/>
            <person name="Reinert K."/>
            <person name="Remington K.A."/>
            <person name="Clark A.G."/>
            <person name="Waterman M.S."/>
            <person name="Eichler E.E."/>
            <person name="Adams M.D."/>
            <person name="Hunkapiller M.W."/>
            <person name="Myers E.W."/>
            <person name="Venter J.C."/>
        </authorList>
    </citation>
    <scope>NUCLEOTIDE SEQUENCE [LARGE SCALE GENOMIC DNA]</scope>
</reference>
<reference key="4">
    <citation type="journal article" date="2004" name="Genome Res.">
        <title>The status, quality, and expansion of the NIH full-length cDNA project: the Mammalian Gene Collection (MGC).</title>
        <authorList>
            <consortium name="The MGC Project Team"/>
        </authorList>
    </citation>
    <scope>NUCLEOTIDE SEQUENCE [LARGE SCALE MRNA] (ISOFORMS 1 AND 3)</scope>
    <scope>VARIANT HIS-82</scope>
    <source>
        <tissue>Brain</tissue>
        <tissue>Testis</tissue>
    </source>
</reference>
<reference key="5">
    <citation type="journal article" date="1997" name="Genome Res.">
        <title>Large-scale concatenation cDNA sequencing.</title>
        <authorList>
            <person name="Yu W."/>
            <person name="Andersson B."/>
            <person name="Worley K.C."/>
            <person name="Muzny D.M."/>
            <person name="Ding Y."/>
            <person name="Liu W."/>
            <person name="Ricafrente J.Y."/>
            <person name="Wentland M.A."/>
            <person name="Lennon G."/>
            <person name="Gibbs R.A."/>
        </authorList>
    </citation>
    <scope>NUCLEOTIDE SEQUENCE [LARGE SCALE MRNA] OF 87-585 (ISOFORM 2)</scope>
    <source>
        <tissue>Brain</tissue>
    </source>
</reference>
<organism>
    <name type="scientific">Homo sapiens</name>
    <name type="common">Human</name>
    <dbReference type="NCBI Taxonomy" id="9606"/>
    <lineage>
        <taxon>Eukaryota</taxon>
        <taxon>Metazoa</taxon>
        <taxon>Chordata</taxon>
        <taxon>Craniata</taxon>
        <taxon>Vertebrata</taxon>
        <taxon>Euteleostomi</taxon>
        <taxon>Mammalia</taxon>
        <taxon>Eutheria</taxon>
        <taxon>Euarchontoglires</taxon>
        <taxon>Primates</taxon>
        <taxon>Haplorrhini</taxon>
        <taxon>Catarrhini</taxon>
        <taxon>Hominidae</taxon>
        <taxon>Homo</taxon>
    </lineage>
</organism>
<feature type="chain" id="PRO_0000058922" description="Protein FAM13C">
    <location>
        <begin position="1"/>
        <end position="585"/>
    </location>
</feature>
<feature type="region of interest" description="Disordered" evidence="2">
    <location>
        <begin position="26"/>
        <end position="45"/>
    </location>
</feature>
<feature type="region of interest" description="Disordered" evidence="2">
    <location>
        <begin position="83"/>
        <end position="138"/>
    </location>
</feature>
<feature type="region of interest" description="Disordered" evidence="2">
    <location>
        <begin position="171"/>
        <end position="216"/>
    </location>
</feature>
<feature type="region of interest" description="Disordered" evidence="2">
    <location>
        <begin position="250"/>
        <end position="282"/>
    </location>
</feature>
<feature type="region of interest" description="Disordered" evidence="2">
    <location>
        <begin position="349"/>
        <end position="391"/>
    </location>
</feature>
<feature type="region of interest" description="Disordered" evidence="2">
    <location>
        <begin position="441"/>
        <end position="477"/>
    </location>
</feature>
<feature type="compositionally biased region" description="Basic and acidic residues" evidence="2">
    <location>
        <begin position="27"/>
        <end position="45"/>
    </location>
</feature>
<feature type="compositionally biased region" description="Basic and acidic residues" evidence="2">
    <location>
        <begin position="99"/>
        <end position="112"/>
    </location>
</feature>
<feature type="compositionally biased region" description="Polar residues" evidence="2">
    <location>
        <begin position="262"/>
        <end position="275"/>
    </location>
</feature>
<feature type="modified residue" description="Phosphoserine" evidence="1">
    <location>
        <position position="131"/>
    </location>
</feature>
<feature type="modified residue" description="Phosphoserine" evidence="1">
    <location>
        <position position="238"/>
    </location>
</feature>
<feature type="modified residue" description="Phosphoserine" evidence="1">
    <location>
        <position position="385"/>
    </location>
</feature>
<feature type="modified residue" description="Phosphoserine" evidence="1">
    <location>
        <position position="386"/>
    </location>
</feature>
<feature type="splice variant" id="VSP_044286" description="In isoform 4 and isoform 5." evidence="4">
    <location>
        <begin position="1"/>
        <end position="83"/>
    </location>
</feature>
<feature type="splice variant" id="VSP_035840" description="In isoform 3." evidence="5">
    <location>
        <begin position="315"/>
        <end position="412"/>
    </location>
</feature>
<feature type="splice variant" id="VSP_035841" description="In isoform 2." evidence="6">
    <original>QEEEDSDEDRPQGS</original>
    <variation>VSQDTCMLLLCTDV</variation>
    <location>
        <begin position="445"/>
        <end position="458"/>
    </location>
</feature>
<feature type="splice variant" id="VSP_045812" description="In isoform 5." evidence="7">
    <location>
        <position position="445"/>
    </location>
</feature>
<feature type="splice variant" id="VSP_035842" description="In isoform 2." evidence="6">
    <location>
        <begin position="459"/>
        <end position="585"/>
    </location>
</feature>
<feature type="sequence variant" id="VAR_047661" description="In dbSNP:rs17853626." evidence="3">
    <original>P</original>
    <variation>H</variation>
    <location>
        <position position="82"/>
    </location>
</feature>
<gene>
    <name type="primary">FAM13C</name>
    <name type="synonym">FAM13C1</name>
</gene>
<protein>
    <recommendedName>
        <fullName>Protein FAM13C</fullName>
    </recommendedName>
</protein>
<sequence>MFSCFCFSLQDNSFSSTTVTECDEDPVSLHEDQTDCSSLRDENNKENYPDAGALVEEHAPPSWEPQQQNVEATVLVDSVLRPSMGNFKSRKPKSIFKAESGRSHGESQETEHVVSSQSECQVRAGTPAHESPQNNAFKCQETVRLQPRIDQRTAISPKDAFETRQDLNEEEAAQVHGVKDPAPASTQSVLADGTDSADPSPVHKDGQNEADSAPEDLHSVGTSRLLYHITDGDNPLLSPRCSIFSQSQRFNLDPESAPSPPSTQQFMMPRSSSRCSCGDGKEPQTITQLTKHIQSLKRKIRKFEEKFEQEKKYRPSHGDKTSNPEVLKWMNDLAKGRKQLKELKLKLSEEQGSAPKGPPRNLLCEQPTVPRENGKPEAAGPEPSSSGEETPDAALTCLKERREQLPPQEDSKVTKQDKNLIKPLYDRYRIIKQILSTPSLIPTIQEEEDSDEDRPQGSQQPSLADPASHLPVGDHLTYSNETEPVRALLPDEKKEVKPPALSMSNLHEATMPVLLDHLRETRADKKRLRKALREFEEQFFKQTGRSPQKEDRIPMADEYYEYKHIKAKLRLLEVLISKQDVAKTI</sequence>
<accession>Q8NE31</accession>
<accession>B7ZB77</accession>
<accession>Q5T631</accession>
<accession>Q6P2M3</accession>
<accession>Q99787</accession>
<proteinExistence type="evidence at protein level"/>